<comment type="function">
    <text evidence="4">Catalyzes the epimerization of the C3' and C5'positions of dTDP-6-deoxy-D-xylo-4-hexulose, forming dTDP-6-deoxy-L-lyxo-4-hexulose.</text>
</comment>
<comment type="catalytic activity">
    <reaction evidence="4">
        <text>dTDP-4-dehydro-6-deoxy-alpha-D-glucose = dTDP-4-dehydro-beta-L-rhamnose</text>
        <dbReference type="Rhea" id="RHEA:16969"/>
        <dbReference type="ChEBI" id="CHEBI:57649"/>
        <dbReference type="ChEBI" id="CHEBI:62830"/>
        <dbReference type="EC" id="5.1.3.13"/>
    </reaction>
</comment>
<comment type="biophysicochemical properties">
    <kinetics>
        <KM evidence="4">0.71 mM for dTDP-6-deoxy-D-xylo-4-hexulose</KM>
        <text evidence="4">kcat is 39 sec(-1) with dTDP-6-deoxy-D-xylo-4-hexulose as substrate.</text>
    </kinetics>
</comment>
<comment type="pathway">
    <text evidence="9">Carbohydrate biosynthesis; dTDP-L-rhamnose biosynthesis.</text>
</comment>
<comment type="pathway">
    <text evidence="10">Bacterial outer membrane biogenesis; LPS O-antigen biosynthesis.</text>
</comment>
<comment type="subunit">
    <text evidence="3">Homodimer.</text>
</comment>
<comment type="similarity">
    <text evidence="7">Belongs to the dTDP-4-dehydrorhamnose 3,5-epimerase family.</text>
</comment>
<name>RMLC_SALTY</name>
<keyword id="KW-0002">3D-structure</keyword>
<keyword id="KW-0119">Carbohydrate metabolism</keyword>
<keyword id="KW-0413">Isomerase</keyword>
<keyword id="KW-0448">Lipopolysaccharide biosynthesis</keyword>
<keyword id="KW-1185">Reference proteome</keyword>
<evidence type="ECO:0000250" key="1">
    <source>
        <dbReference type="UniProtKB" id="Q5SFD1"/>
    </source>
</evidence>
<evidence type="ECO:0000250" key="2">
    <source>
        <dbReference type="UniProtKB" id="Q9HU21"/>
    </source>
</evidence>
<evidence type="ECO:0000269" key="3">
    <source>
    </source>
</evidence>
<evidence type="ECO:0000269" key="4">
    <source>
    </source>
</evidence>
<evidence type="ECO:0000303" key="5">
    <source>
    </source>
</evidence>
<evidence type="ECO:0000303" key="6">
    <source>
    </source>
</evidence>
<evidence type="ECO:0000305" key="7"/>
<evidence type="ECO:0000305" key="8">
    <source>
    </source>
</evidence>
<evidence type="ECO:0000305" key="9">
    <source>
    </source>
</evidence>
<evidence type="ECO:0000305" key="10">
    <source>
    </source>
</evidence>
<evidence type="ECO:0007744" key="11">
    <source>
        <dbReference type="PDB" id="1DZR"/>
    </source>
</evidence>
<evidence type="ECO:0007744" key="12">
    <source>
        <dbReference type="PDB" id="1DZT"/>
    </source>
</evidence>
<evidence type="ECO:0007829" key="13">
    <source>
        <dbReference type="PDB" id="1DZR"/>
    </source>
</evidence>
<gene>
    <name evidence="6" type="primary">rfbC</name>
    <name type="synonym">rmlC</name>
    <name type="ordered locus">STM2094</name>
</gene>
<accession>P26394</accession>
<feature type="chain" id="PRO_0000207979" description="dTDP-4-dehydrorhamnose 3,5-epimerase">
    <location>
        <begin position="1"/>
        <end position="183"/>
    </location>
</feature>
<feature type="active site" description="Proton acceptor" evidence="3 4 11 12">
    <location>
        <position position="63"/>
    </location>
</feature>
<feature type="active site" description="Proton donor" evidence="3 4 12">
    <location>
        <position position="133"/>
    </location>
</feature>
<feature type="binding site" evidence="2">
    <location>
        <position position="24"/>
    </location>
    <ligand>
        <name>substrate</name>
    </ligand>
</feature>
<feature type="binding site" evidence="3 12">
    <location>
        <position position="29"/>
    </location>
    <ligand>
        <name>substrate</name>
    </ligand>
</feature>
<feature type="binding site" evidence="8 12">
    <location>
        <begin position="48"/>
        <end position="50"/>
    </location>
    <ligand>
        <name>substrate</name>
    </ligand>
</feature>
<feature type="binding site" evidence="3 11 12">
    <location>
        <position position="60"/>
    </location>
    <ligand>
        <name>substrate</name>
    </ligand>
</feature>
<feature type="binding site" evidence="3 11 12">
    <location>
        <position position="73"/>
    </location>
    <ligand>
        <name>substrate</name>
    </ligand>
</feature>
<feature type="binding site" evidence="3 11 12">
    <location>
        <position position="120"/>
    </location>
    <ligand>
        <name>substrate</name>
    </ligand>
</feature>
<feature type="binding site" evidence="2">
    <location>
        <position position="144"/>
    </location>
    <ligand>
        <name>substrate</name>
    </ligand>
</feature>
<feature type="binding site" evidence="3 12">
    <location>
        <position position="169"/>
    </location>
    <ligand>
        <name>substrate</name>
    </ligand>
</feature>
<feature type="site" description="Participates in a stacking interaction with the thymidine ring of dTDP-4-oxo-6-deoxyglucose" evidence="1">
    <location>
        <position position="139"/>
    </location>
</feature>
<feature type="mutagenesis site" description="Loss of epimerase activity." evidence="4">
    <original>H</original>
    <variation>A</variation>
    <location>
        <position position="63"/>
    </location>
</feature>
<feature type="mutagenesis site" description="Reduces the epimerase activity by over 100-fold." evidence="4">
    <original>K</original>
    <variation>A</variation>
    <location>
        <position position="73"/>
    </location>
</feature>
<feature type="mutagenesis site" description="Reduces the epimerase activity by over 1000-fold." evidence="4">
    <original>Y</original>
    <variation>F</variation>
    <location>
        <position position="133"/>
    </location>
</feature>
<feature type="strand" evidence="13">
    <location>
        <begin position="3"/>
        <end position="6"/>
    </location>
</feature>
<feature type="strand" evidence="13">
    <location>
        <begin position="13"/>
        <end position="16"/>
    </location>
</feature>
<feature type="strand" evidence="13">
    <location>
        <begin position="19"/>
        <end position="22"/>
    </location>
</feature>
<feature type="strand" evidence="13">
    <location>
        <begin position="25"/>
        <end position="32"/>
    </location>
</feature>
<feature type="helix" evidence="13">
    <location>
        <begin position="33"/>
        <end position="40"/>
    </location>
</feature>
<feature type="strand" evidence="13">
    <location>
        <begin position="48"/>
        <end position="55"/>
    </location>
</feature>
<feature type="strand" evidence="13">
    <location>
        <begin position="58"/>
        <end position="65"/>
    </location>
</feature>
<feature type="helix" evidence="13">
    <location>
        <begin position="67"/>
        <end position="69"/>
    </location>
</feature>
<feature type="strand" evidence="13">
    <location>
        <begin position="73"/>
        <end position="88"/>
    </location>
</feature>
<feature type="turn" evidence="13">
    <location>
        <begin position="94"/>
        <end position="97"/>
    </location>
</feature>
<feature type="strand" evidence="13">
    <location>
        <begin position="99"/>
        <end position="105"/>
    </location>
</feature>
<feature type="turn" evidence="13">
    <location>
        <begin position="106"/>
        <end position="108"/>
    </location>
</feature>
<feature type="strand" evidence="13">
    <location>
        <begin position="111"/>
        <end position="114"/>
    </location>
</feature>
<feature type="strand" evidence="13">
    <location>
        <begin position="118"/>
        <end position="124"/>
    </location>
</feature>
<feature type="strand" evidence="13">
    <location>
        <begin position="126"/>
        <end position="137"/>
    </location>
</feature>
<feature type="turn" evidence="13">
    <location>
        <begin position="141"/>
        <end position="143"/>
    </location>
</feature>
<feature type="strand" evidence="13">
    <location>
        <begin position="144"/>
        <end position="146"/>
    </location>
</feature>
<feature type="turn" evidence="13">
    <location>
        <begin position="152"/>
        <end position="155"/>
    </location>
</feature>
<feature type="helix" evidence="13">
    <location>
        <begin position="168"/>
        <end position="171"/>
    </location>
</feature>
<feature type="helix" evidence="13">
    <location>
        <begin position="176"/>
        <end position="178"/>
    </location>
</feature>
<reference key="1">
    <citation type="journal article" date="1991" name="Mol. Microbiol.">
        <title>Structure and sequence of the rfb (O antigen) gene cluster of Salmonella serovar typhimurium (strain LT2).</title>
        <authorList>
            <person name="Jiang X.-M."/>
            <person name="Neal B."/>
            <person name="Santiago F."/>
            <person name="Lee S.J."/>
            <person name="Romana L.K."/>
            <person name="Reeves P.R."/>
        </authorList>
    </citation>
    <scope>NUCLEOTIDE SEQUENCE [GENOMIC DNA]</scope>
    <scope>PATHWAY</scope>
    <source>
        <strain>LT2</strain>
    </source>
</reference>
<reference key="2">
    <citation type="journal article" date="2001" name="Nature">
        <title>Complete genome sequence of Salmonella enterica serovar Typhimurium LT2.</title>
        <authorList>
            <person name="McClelland M."/>
            <person name="Sanderson K.E."/>
            <person name="Spieth J."/>
            <person name="Clifton S.W."/>
            <person name="Latreille P."/>
            <person name="Courtney L."/>
            <person name="Porwollik S."/>
            <person name="Ali J."/>
            <person name="Dante M."/>
            <person name="Du F."/>
            <person name="Hou S."/>
            <person name="Layman D."/>
            <person name="Leonard S."/>
            <person name="Nguyen C."/>
            <person name="Scott K."/>
            <person name="Holmes A."/>
            <person name="Grewal N."/>
            <person name="Mulvaney E."/>
            <person name="Ryan E."/>
            <person name="Sun H."/>
            <person name="Florea L."/>
            <person name="Miller W."/>
            <person name="Stoneking T."/>
            <person name="Nhan M."/>
            <person name="Waterston R."/>
            <person name="Wilson R.K."/>
        </authorList>
    </citation>
    <scope>NUCLEOTIDE SEQUENCE [LARGE SCALE GENOMIC DNA]</scope>
    <source>
        <strain>LT2 / SGSC1412 / ATCC 700720</strain>
    </source>
</reference>
<reference key="3">
    <citation type="journal article" date="2007" name="J. Mol. Biol.">
        <title>RmlC, a C3' and C5' carbohydrate epimerase, appears to operate via an intermediate with an unusual twist boat conformation.</title>
        <authorList>
            <person name="Dong C."/>
            <person name="Major L.L."/>
            <person name="Srikannathasan V."/>
            <person name="Errey J.C."/>
            <person name="Giraud M.F."/>
            <person name="Lam J.S."/>
            <person name="Graninger M."/>
            <person name="Messner P."/>
            <person name="McNeil M.R."/>
            <person name="Field R.A."/>
            <person name="Whitfield C."/>
            <person name="Naismith J.H."/>
        </authorList>
    </citation>
    <scope>MUTAGENESIS OF HIS-63; LYS-73 AND TYR-133</scope>
    <scope>FUNCTION IN DTDP-RHAMNOSE BIOSYNTHESIS</scope>
    <scope>CATALYTIC ACTIVITY</scope>
    <scope>BIOPHYSICOCHEMICAL PROPERTIES</scope>
    <scope>REACTION MECHANISM</scope>
    <scope>PATHWAY</scope>
    <scope>ACTIVE SITE</scope>
</reference>
<reference key="4">
    <citation type="journal article" date="2000" name="Nat. Struct. Biol.">
        <title>RmlC, the third enzyme of dTDP-L-rhamnose pathway, is a new class of epimerase.</title>
        <authorList>
            <person name="Giraud M.-F."/>
            <person name="Leonard G.A."/>
            <person name="Field R.A."/>
            <person name="Berlind C."/>
            <person name="Naismith J.H."/>
        </authorList>
    </citation>
    <scope>X-RAY CRYSTALLOGRAPHY (2.17 ANGSTROMS) IN COMPLEX WITH SUBSTRATE ANALOGS</scope>
    <scope>ACTIVE SITE</scope>
    <scope>SUBUNIT</scope>
</reference>
<dbReference type="EC" id="5.1.3.13" evidence="4"/>
<dbReference type="EMBL" id="X56793">
    <property type="protein sequence ID" value="CAA40118.1"/>
    <property type="molecule type" value="Genomic_DNA"/>
</dbReference>
<dbReference type="EMBL" id="AE006468">
    <property type="protein sequence ID" value="AAL20998.1"/>
    <property type="molecule type" value="Genomic_DNA"/>
</dbReference>
<dbReference type="PIR" id="S15302">
    <property type="entry name" value="S15302"/>
</dbReference>
<dbReference type="RefSeq" id="NP_461039.1">
    <property type="nucleotide sequence ID" value="NC_003197.2"/>
</dbReference>
<dbReference type="RefSeq" id="WP_000973708.1">
    <property type="nucleotide sequence ID" value="NC_003197.2"/>
</dbReference>
<dbReference type="PDB" id="1DZR">
    <property type="method" value="X-ray"/>
    <property type="resolution" value="2.17 A"/>
    <property type="chains" value="A/B=1-183"/>
</dbReference>
<dbReference type="PDB" id="1DZT">
    <property type="method" value="X-ray"/>
    <property type="resolution" value="2.20 A"/>
    <property type="chains" value="A/B=1-183"/>
</dbReference>
<dbReference type="PDBsum" id="1DZR"/>
<dbReference type="PDBsum" id="1DZT"/>
<dbReference type="SMR" id="P26394"/>
<dbReference type="STRING" id="99287.STM2094"/>
<dbReference type="DrugBank" id="DB02549">
    <property type="generic name" value="3'-O-Acetylthymidine-5'-diphosphate"/>
</dbReference>
<dbReference type="PaxDb" id="99287-STM2094"/>
<dbReference type="GeneID" id="1253615"/>
<dbReference type="KEGG" id="stm:STM2094"/>
<dbReference type="PATRIC" id="fig|99287.12.peg.2216"/>
<dbReference type="HOGENOM" id="CLU_090940_1_1_6"/>
<dbReference type="OMA" id="AHVTYKC"/>
<dbReference type="PhylomeDB" id="P26394"/>
<dbReference type="BioCyc" id="SENT99287:STM2094-MONOMER"/>
<dbReference type="SABIO-RK" id="P26394"/>
<dbReference type="UniPathway" id="UPA00124"/>
<dbReference type="UniPathway" id="UPA00281"/>
<dbReference type="EvolutionaryTrace" id="P26394"/>
<dbReference type="Proteomes" id="UP000001014">
    <property type="component" value="Chromosome"/>
</dbReference>
<dbReference type="GO" id="GO:0005829">
    <property type="term" value="C:cytosol"/>
    <property type="evidence" value="ECO:0000318"/>
    <property type="project" value="GO_Central"/>
</dbReference>
<dbReference type="GO" id="GO:0008830">
    <property type="term" value="F:dTDP-4-dehydrorhamnose 3,5-epimerase activity"/>
    <property type="evidence" value="ECO:0000314"/>
    <property type="project" value="UniProtKB"/>
</dbReference>
<dbReference type="GO" id="GO:0019305">
    <property type="term" value="P:dTDP-rhamnose biosynthetic process"/>
    <property type="evidence" value="ECO:0000318"/>
    <property type="project" value="GO_Central"/>
</dbReference>
<dbReference type="GO" id="GO:0009103">
    <property type="term" value="P:lipopolysaccharide biosynthetic process"/>
    <property type="evidence" value="ECO:0000314"/>
    <property type="project" value="UniProtKB"/>
</dbReference>
<dbReference type="GO" id="GO:0009243">
    <property type="term" value="P:O antigen biosynthetic process"/>
    <property type="evidence" value="ECO:0007669"/>
    <property type="project" value="UniProtKB-UniPathway"/>
</dbReference>
<dbReference type="GO" id="GO:0000271">
    <property type="term" value="P:polysaccharide biosynthetic process"/>
    <property type="evidence" value="ECO:0000314"/>
    <property type="project" value="UniProtKB"/>
</dbReference>
<dbReference type="CDD" id="cd00438">
    <property type="entry name" value="cupin_RmlC"/>
    <property type="match status" value="1"/>
</dbReference>
<dbReference type="FunFam" id="2.60.120.10:FF:000051">
    <property type="entry name" value="dTDP-4-dehydrorhamnose 3,5-epimerase"/>
    <property type="match status" value="1"/>
</dbReference>
<dbReference type="Gene3D" id="2.60.120.10">
    <property type="entry name" value="Jelly Rolls"/>
    <property type="match status" value="1"/>
</dbReference>
<dbReference type="InterPro" id="IPR000888">
    <property type="entry name" value="RmlC-like"/>
</dbReference>
<dbReference type="InterPro" id="IPR014710">
    <property type="entry name" value="RmlC-like_jellyroll"/>
</dbReference>
<dbReference type="InterPro" id="IPR011051">
    <property type="entry name" value="RmlC_Cupin_sf"/>
</dbReference>
<dbReference type="NCBIfam" id="TIGR01221">
    <property type="entry name" value="rmlC"/>
    <property type="match status" value="1"/>
</dbReference>
<dbReference type="PANTHER" id="PTHR21047">
    <property type="entry name" value="DTDP-6-DEOXY-D-GLUCOSE-3,5 EPIMERASE"/>
    <property type="match status" value="1"/>
</dbReference>
<dbReference type="PANTHER" id="PTHR21047:SF2">
    <property type="entry name" value="THYMIDINE DIPHOSPHO-4-KETO-RHAMNOSE 3,5-EPIMERASE"/>
    <property type="match status" value="1"/>
</dbReference>
<dbReference type="Pfam" id="PF00908">
    <property type="entry name" value="dTDP_sugar_isom"/>
    <property type="match status" value="1"/>
</dbReference>
<dbReference type="SUPFAM" id="SSF51182">
    <property type="entry name" value="RmlC-like cupins"/>
    <property type="match status" value="1"/>
</dbReference>
<proteinExistence type="evidence at protein level"/>
<sequence length="183" mass="20663">MMIVIKTAIPDVLILEPKVFGDERGFFFESYNQQTFEELIGRKVTFVQDNHSKSKKNVLRGLHFQRGENAQGKLVRCAVGEVFDVAVDIRKESPTFGQWVGVNLSAENKRQLWIPEGFAHGFVTLSEYAEFLYKATNYYSPSSEGSILWNDEAIGIEWPFSQLPELSAKDAAAPLLDQALLTE</sequence>
<protein>
    <recommendedName>
        <fullName evidence="9">dTDP-4-dehydrorhamnose 3,5-epimerase</fullName>
        <ecNumber evidence="4">5.1.3.13</ecNumber>
    </recommendedName>
    <alternativeName>
        <fullName evidence="9">Thymidine diphospho-4-keto-rhamnose 3,5-epimerase</fullName>
    </alternativeName>
    <alternativeName>
        <fullName evidence="9">dTDP-4-keto-6-deoxyglucose 3,5-epimerase</fullName>
    </alternativeName>
    <alternativeName>
        <fullName evidence="5">dTDP-6-deoxy-D-xylo-4-hexulose 3,5-epimerase</fullName>
    </alternativeName>
    <alternativeName>
        <fullName evidence="9">dTDP-L-rhamnose synthase</fullName>
    </alternativeName>
</protein>
<organism>
    <name type="scientific">Salmonella typhimurium (strain LT2 / SGSC1412 / ATCC 700720)</name>
    <dbReference type="NCBI Taxonomy" id="99287"/>
    <lineage>
        <taxon>Bacteria</taxon>
        <taxon>Pseudomonadati</taxon>
        <taxon>Pseudomonadota</taxon>
        <taxon>Gammaproteobacteria</taxon>
        <taxon>Enterobacterales</taxon>
        <taxon>Enterobacteriaceae</taxon>
        <taxon>Salmonella</taxon>
    </lineage>
</organism>